<protein>
    <recommendedName>
        <fullName evidence="1">2-isopropylmalate synthase</fullName>
        <ecNumber evidence="1">2.3.3.13</ecNumber>
    </recommendedName>
    <alternativeName>
        <fullName evidence="1">Alpha-IPM synthase</fullName>
    </alternativeName>
    <alternativeName>
        <fullName evidence="1">Alpha-isopropylmalate synthase</fullName>
    </alternativeName>
</protein>
<sequence>MSNRVIIFDTTLRDGEQALAASLSVKEKLQIAMALERLGVDVMEVGFPVSSPGDFESVQTIARTIKNSRVCALSRALEKDIDAAAQALSVADQFRIHTFISTSTIHVESKLKRSFDQVLEMAVGAVKYARRFTDDVEFSCEDAGRTPIDNLCRMVEAAILAGARTINIPDTVGYTVPSEFGNIIQTLFNRVPNIDQAVISVHCHDDLGLSVANSITAVQHGARQIECTINGIGERAGNCSLEEIAMILATRKGMLGLETGINAKEIHRTSNLVSQLCNMPVQANKAIVGANAFTHSSGIHQDGMLKAQNTYEIMTPESIGLNRNNLNMTSRSGRHVIKHRMEEMGYSEHDYNMDTLYEEFLKLADKKGQVFDYDLEALAFMEAQAEEDNHYQLQQLVVQSDSTEGVATATVRIEVGGEIKTEAATGNGPVDAAYNAIARATDRRIDIISYKLGAKGVGQNALGQVDITAVYHEQNFHGVGLATDVVEASARALVHVMNLTCRADKVADYKQSMQKNRELGGV</sequence>
<accession>A4Y2M0</accession>
<dbReference type="EC" id="2.3.3.13" evidence="1"/>
<dbReference type="EMBL" id="CP000681">
    <property type="protein sequence ID" value="ABP74203.1"/>
    <property type="molecule type" value="Genomic_DNA"/>
</dbReference>
<dbReference type="SMR" id="A4Y2M0"/>
<dbReference type="STRING" id="319224.Sputcn32_0471"/>
<dbReference type="KEGG" id="spc:Sputcn32_0471"/>
<dbReference type="eggNOG" id="COG0119">
    <property type="taxonomic scope" value="Bacteria"/>
</dbReference>
<dbReference type="HOGENOM" id="CLU_022158_0_1_6"/>
<dbReference type="UniPathway" id="UPA00048">
    <property type="reaction ID" value="UER00070"/>
</dbReference>
<dbReference type="GO" id="GO:0005829">
    <property type="term" value="C:cytosol"/>
    <property type="evidence" value="ECO:0007669"/>
    <property type="project" value="TreeGrafter"/>
</dbReference>
<dbReference type="GO" id="GO:0003852">
    <property type="term" value="F:2-isopropylmalate synthase activity"/>
    <property type="evidence" value="ECO:0007669"/>
    <property type="project" value="UniProtKB-UniRule"/>
</dbReference>
<dbReference type="GO" id="GO:0003985">
    <property type="term" value="F:acetyl-CoA C-acetyltransferase activity"/>
    <property type="evidence" value="ECO:0007669"/>
    <property type="project" value="UniProtKB-UniRule"/>
</dbReference>
<dbReference type="GO" id="GO:0030145">
    <property type="term" value="F:manganese ion binding"/>
    <property type="evidence" value="ECO:0007669"/>
    <property type="project" value="UniProtKB-UniRule"/>
</dbReference>
<dbReference type="GO" id="GO:0009098">
    <property type="term" value="P:L-leucine biosynthetic process"/>
    <property type="evidence" value="ECO:0007669"/>
    <property type="project" value="UniProtKB-UniRule"/>
</dbReference>
<dbReference type="CDD" id="cd07940">
    <property type="entry name" value="DRE_TIM_IPMS"/>
    <property type="match status" value="1"/>
</dbReference>
<dbReference type="FunFam" id="1.10.238.260:FF:000001">
    <property type="entry name" value="2-isopropylmalate synthase"/>
    <property type="match status" value="1"/>
</dbReference>
<dbReference type="FunFam" id="3.20.20.70:FF:000010">
    <property type="entry name" value="2-isopropylmalate synthase"/>
    <property type="match status" value="1"/>
</dbReference>
<dbReference type="Gene3D" id="1.10.238.260">
    <property type="match status" value="1"/>
</dbReference>
<dbReference type="Gene3D" id="3.30.160.270">
    <property type="match status" value="1"/>
</dbReference>
<dbReference type="Gene3D" id="3.20.20.70">
    <property type="entry name" value="Aldolase class I"/>
    <property type="match status" value="1"/>
</dbReference>
<dbReference type="HAMAP" id="MF_01025">
    <property type="entry name" value="LeuA_type1"/>
    <property type="match status" value="1"/>
</dbReference>
<dbReference type="InterPro" id="IPR050073">
    <property type="entry name" value="2-IPM_HCS-like"/>
</dbReference>
<dbReference type="InterPro" id="IPR013709">
    <property type="entry name" value="2-isopropylmalate_synth_dimer"/>
</dbReference>
<dbReference type="InterPro" id="IPR002034">
    <property type="entry name" value="AIPM/Hcit_synth_CS"/>
</dbReference>
<dbReference type="InterPro" id="IPR013785">
    <property type="entry name" value="Aldolase_TIM"/>
</dbReference>
<dbReference type="InterPro" id="IPR054691">
    <property type="entry name" value="LeuA/HCS_post-cat"/>
</dbReference>
<dbReference type="InterPro" id="IPR036230">
    <property type="entry name" value="LeuA_allosteric_dom_sf"/>
</dbReference>
<dbReference type="InterPro" id="IPR005671">
    <property type="entry name" value="LeuA_bact_synth"/>
</dbReference>
<dbReference type="InterPro" id="IPR000891">
    <property type="entry name" value="PYR_CT"/>
</dbReference>
<dbReference type="NCBIfam" id="TIGR00973">
    <property type="entry name" value="leuA_bact"/>
    <property type="match status" value="1"/>
</dbReference>
<dbReference type="NCBIfam" id="NF002084">
    <property type="entry name" value="PRK00915.1-1"/>
    <property type="match status" value="1"/>
</dbReference>
<dbReference type="NCBIfam" id="NF002086">
    <property type="entry name" value="PRK00915.1-3"/>
    <property type="match status" value="1"/>
</dbReference>
<dbReference type="PANTHER" id="PTHR10277:SF9">
    <property type="entry name" value="2-ISOPROPYLMALATE SYNTHASE 1, CHLOROPLASTIC-RELATED"/>
    <property type="match status" value="1"/>
</dbReference>
<dbReference type="PANTHER" id="PTHR10277">
    <property type="entry name" value="HOMOCITRATE SYNTHASE-RELATED"/>
    <property type="match status" value="1"/>
</dbReference>
<dbReference type="Pfam" id="PF22617">
    <property type="entry name" value="HCS_D2"/>
    <property type="match status" value="1"/>
</dbReference>
<dbReference type="Pfam" id="PF00682">
    <property type="entry name" value="HMGL-like"/>
    <property type="match status" value="1"/>
</dbReference>
<dbReference type="Pfam" id="PF08502">
    <property type="entry name" value="LeuA_dimer"/>
    <property type="match status" value="1"/>
</dbReference>
<dbReference type="SMART" id="SM00917">
    <property type="entry name" value="LeuA_dimer"/>
    <property type="match status" value="1"/>
</dbReference>
<dbReference type="SUPFAM" id="SSF110921">
    <property type="entry name" value="2-isopropylmalate synthase LeuA, allosteric (dimerisation) domain"/>
    <property type="match status" value="1"/>
</dbReference>
<dbReference type="SUPFAM" id="SSF51569">
    <property type="entry name" value="Aldolase"/>
    <property type="match status" value="1"/>
</dbReference>
<dbReference type="PROSITE" id="PS00815">
    <property type="entry name" value="AIPM_HOMOCIT_SYNTH_1"/>
    <property type="match status" value="1"/>
</dbReference>
<dbReference type="PROSITE" id="PS00816">
    <property type="entry name" value="AIPM_HOMOCIT_SYNTH_2"/>
    <property type="match status" value="1"/>
</dbReference>
<dbReference type="PROSITE" id="PS50991">
    <property type="entry name" value="PYR_CT"/>
    <property type="match status" value="1"/>
</dbReference>
<feature type="chain" id="PRO_1000149287" description="2-isopropylmalate synthase">
    <location>
        <begin position="1"/>
        <end position="522"/>
    </location>
</feature>
<feature type="domain" description="Pyruvate carboxyltransferase" evidence="1">
    <location>
        <begin position="5"/>
        <end position="267"/>
    </location>
</feature>
<feature type="region of interest" description="Regulatory domain" evidence="1">
    <location>
        <begin position="392"/>
        <end position="522"/>
    </location>
</feature>
<feature type="binding site" evidence="1">
    <location>
        <position position="14"/>
    </location>
    <ligand>
        <name>Mn(2+)</name>
        <dbReference type="ChEBI" id="CHEBI:29035"/>
    </ligand>
</feature>
<feature type="binding site" evidence="1">
    <location>
        <position position="202"/>
    </location>
    <ligand>
        <name>Mn(2+)</name>
        <dbReference type="ChEBI" id="CHEBI:29035"/>
    </ligand>
</feature>
<feature type="binding site" evidence="1">
    <location>
        <position position="204"/>
    </location>
    <ligand>
        <name>Mn(2+)</name>
        <dbReference type="ChEBI" id="CHEBI:29035"/>
    </ligand>
</feature>
<feature type="binding site" evidence="1">
    <location>
        <position position="238"/>
    </location>
    <ligand>
        <name>Mn(2+)</name>
        <dbReference type="ChEBI" id="CHEBI:29035"/>
    </ligand>
</feature>
<evidence type="ECO:0000255" key="1">
    <source>
        <dbReference type="HAMAP-Rule" id="MF_01025"/>
    </source>
</evidence>
<gene>
    <name evidence="1" type="primary">leuA</name>
    <name type="ordered locus">Sputcn32_0471</name>
</gene>
<name>LEU1_SHEPC</name>
<keyword id="KW-0028">Amino-acid biosynthesis</keyword>
<keyword id="KW-0100">Branched-chain amino acid biosynthesis</keyword>
<keyword id="KW-0963">Cytoplasm</keyword>
<keyword id="KW-0432">Leucine biosynthesis</keyword>
<keyword id="KW-0464">Manganese</keyword>
<keyword id="KW-0479">Metal-binding</keyword>
<keyword id="KW-0808">Transferase</keyword>
<reference key="1">
    <citation type="submission" date="2007-04" db="EMBL/GenBank/DDBJ databases">
        <title>Complete sequence of Shewanella putrefaciens CN-32.</title>
        <authorList>
            <consortium name="US DOE Joint Genome Institute"/>
            <person name="Copeland A."/>
            <person name="Lucas S."/>
            <person name="Lapidus A."/>
            <person name="Barry K."/>
            <person name="Detter J.C."/>
            <person name="Glavina del Rio T."/>
            <person name="Hammon N."/>
            <person name="Israni S."/>
            <person name="Dalin E."/>
            <person name="Tice H."/>
            <person name="Pitluck S."/>
            <person name="Chain P."/>
            <person name="Malfatti S."/>
            <person name="Shin M."/>
            <person name="Vergez L."/>
            <person name="Schmutz J."/>
            <person name="Larimer F."/>
            <person name="Land M."/>
            <person name="Hauser L."/>
            <person name="Kyrpides N."/>
            <person name="Mikhailova N."/>
            <person name="Romine M.F."/>
            <person name="Fredrickson J."/>
            <person name="Tiedje J."/>
            <person name="Richardson P."/>
        </authorList>
    </citation>
    <scope>NUCLEOTIDE SEQUENCE [LARGE SCALE GENOMIC DNA]</scope>
    <source>
        <strain>CN-32 / ATCC BAA-453</strain>
    </source>
</reference>
<proteinExistence type="inferred from homology"/>
<organism>
    <name type="scientific">Shewanella putrefaciens (strain CN-32 / ATCC BAA-453)</name>
    <dbReference type="NCBI Taxonomy" id="319224"/>
    <lineage>
        <taxon>Bacteria</taxon>
        <taxon>Pseudomonadati</taxon>
        <taxon>Pseudomonadota</taxon>
        <taxon>Gammaproteobacteria</taxon>
        <taxon>Alteromonadales</taxon>
        <taxon>Shewanellaceae</taxon>
        <taxon>Shewanella</taxon>
    </lineage>
</organism>
<comment type="function">
    <text evidence="1">Catalyzes the condensation of the acetyl group of acetyl-CoA with 3-methyl-2-oxobutanoate (2-ketoisovalerate) to form 3-carboxy-3-hydroxy-4-methylpentanoate (2-isopropylmalate).</text>
</comment>
<comment type="catalytic activity">
    <reaction evidence="1">
        <text>3-methyl-2-oxobutanoate + acetyl-CoA + H2O = (2S)-2-isopropylmalate + CoA + H(+)</text>
        <dbReference type="Rhea" id="RHEA:21524"/>
        <dbReference type="ChEBI" id="CHEBI:1178"/>
        <dbReference type="ChEBI" id="CHEBI:11851"/>
        <dbReference type="ChEBI" id="CHEBI:15377"/>
        <dbReference type="ChEBI" id="CHEBI:15378"/>
        <dbReference type="ChEBI" id="CHEBI:57287"/>
        <dbReference type="ChEBI" id="CHEBI:57288"/>
        <dbReference type="EC" id="2.3.3.13"/>
    </reaction>
</comment>
<comment type="cofactor">
    <cofactor evidence="1">
        <name>Mn(2+)</name>
        <dbReference type="ChEBI" id="CHEBI:29035"/>
    </cofactor>
</comment>
<comment type="pathway">
    <text evidence="1">Amino-acid biosynthesis; L-leucine biosynthesis; L-leucine from 3-methyl-2-oxobutanoate: step 1/4.</text>
</comment>
<comment type="subunit">
    <text evidence="1">Homodimer.</text>
</comment>
<comment type="subcellular location">
    <subcellularLocation>
        <location evidence="1">Cytoplasm</location>
    </subcellularLocation>
</comment>
<comment type="similarity">
    <text evidence="1">Belongs to the alpha-IPM synthase/homocitrate synthase family. LeuA type 1 subfamily.</text>
</comment>